<sequence>MYAVIKTGGKQYKVAVGEKLKVEQIPADIDAEITLDQVLAVGEGESIQFGTPLVSGASVKATVVSHGRHAKVTIFKMRRRKHYQKHGGHRQNYTELRIDAINA</sequence>
<name>RL21_BURTA</name>
<keyword id="KW-0687">Ribonucleoprotein</keyword>
<keyword id="KW-0689">Ribosomal protein</keyword>
<keyword id="KW-0694">RNA-binding</keyword>
<keyword id="KW-0699">rRNA-binding</keyword>
<accession>Q2SZG2</accession>
<protein>
    <recommendedName>
        <fullName evidence="1">Large ribosomal subunit protein bL21</fullName>
    </recommendedName>
    <alternativeName>
        <fullName evidence="2">50S ribosomal protein L21</fullName>
    </alternativeName>
</protein>
<proteinExistence type="inferred from homology"/>
<feature type="chain" id="PRO_0000269297" description="Large ribosomal subunit protein bL21">
    <location>
        <begin position="1"/>
        <end position="103"/>
    </location>
</feature>
<dbReference type="EMBL" id="CP000086">
    <property type="protein sequence ID" value="ABC36835.1"/>
    <property type="molecule type" value="Genomic_DNA"/>
</dbReference>
<dbReference type="RefSeq" id="WP_004194344.1">
    <property type="nucleotide sequence ID" value="NZ_CP008785.1"/>
</dbReference>
<dbReference type="SMR" id="Q2SZG2"/>
<dbReference type="GeneID" id="93061605"/>
<dbReference type="KEGG" id="bte:BTH_I1140"/>
<dbReference type="HOGENOM" id="CLU_061463_3_1_4"/>
<dbReference type="Proteomes" id="UP000001930">
    <property type="component" value="Chromosome I"/>
</dbReference>
<dbReference type="GO" id="GO:0005737">
    <property type="term" value="C:cytoplasm"/>
    <property type="evidence" value="ECO:0007669"/>
    <property type="project" value="UniProtKB-ARBA"/>
</dbReference>
<dbReference type="GO" id="GO:1990904">
    <property type="term" value="C:ribonucleoprotein complex"/>
    <property type="evidence" value="ECO:0007669"/>
    <property type="project" value="UniProtKB-KW"/>
</dbReference>
<dbReference type="GO" id="GO:0005840">
    <property type="term" value="C:ribosome"/>
    <property type="evidence" value="ECO:0007669"/>
    <property type="project" value="UniProtKB-KW"/>
</dbReference>
<dbReference type="GO" id="GO:0019843">
    <property type="term" value="F:rRNA binding"/>
    <property type="evidence" value="ECO:0007669"/>
    <property type="project" value="UniProtKB-UniRule"/>
</dbReference>
<dbReference type="GO" id="GO:0003735">
    <property type="term" value="F:structural constituent of ribosome"/>
    <property type="evidence" value="ECO:0007669"/>
    <property type="project" value="InterPro"/>
</dbReference>
<dbReference type="GO" id="GO:0006412">
    <property type="term" value="P:translation"/>
    <property type="evidence" value="ECO:0007669"/>
    <property type="project" value="UniProtKB-UniRule"/>
</dbReference>
<dbReference type="HAMAP" id="MF_01363">
    <property type="entry name" value="Ribosomal_bL21"/>
    <property type="match status" value="1"/>
</dbReference>
<dbReference type="InterPro" id="IPR028909">
    <property type="entry name" value="bL21-like"/>
</dbReference>
<dbReference type="InterPro" id="IPR036164">
    <property type="entry name" value="bL21-like_sf"/>
</dbReference>
<dbReference type="InterPro" id="IPR001787">
    <property type="entry name" value="Ribosomal_bL21"/>
</dbReference>
<dbReference type="InterPro" id="IPR018258">
    <property type="entry name" value="Ribosomal_bL21_CS"/>
</dbReference>
<dbReference type="NCBIfam" id="TIGR00061">
    <property type="entry name" value="L21"/>
    <property type="match status" value="1"/>
</dbReference>
<dbReference type="PANTHER" id="PTHR21349">
    <property type="entry name" value="50S RIBOSOMAL PROTEIN L21"/>
    <property type="match status" value="1"/>
</dbReference>
<dbReference type="PANTHER" id="PTHR21349:SF0">
    <property type="entry name" value="LARGE RIBOSOMAL SUBUNIT PROTEIN BL21M"/>
    <property type="match status" value="1"/>
</dbReference>
<dbReference type="Pfam" id="PF00829">
    <property type="entry name" value="Ribosomal_L21p"/>
    <property type="match status" value="1"/>
</dbReference>
<dbReference type="SUPFAM" id="SSF141091">
    <property type="entry name" value="L21p-like"/>
    <property type="match status" value="1"/>
</dbReference>
<dbReference type="PROSITE" id="PS01169">
    <property type="entry name" value="RIBOSOMAL_L21"/>
    <property type="match status" value="1"/>
</dbReference>
<reference key="1">
    <citation type="journal article" date="2005" name="BMC Genomics">
        <title>Bacterial genome adaptation to niches: divergence of the potential virulence genes in three Burkholderia species of different survival strategies.</title>
        <authorList>
            <person name="Kim H.S."/>
            <person name="Schell M.A."/>
            <person name="Yu Y."/>
            <person name="Ulrich R.L."/>
            <person name="Sarria S.H."/>
            <person name="Nierman W.C."/>
            <person name="DeShazer D."/>
        </authorList>
    </citation>
    <scope>NUCLEOTIDE SEQUENCE [LARGE SCALE GENOMIC DNA]</scope>
    <source>
        <strain>ATCC 700388 / DSM 13276 / CCUG 48851 / CIP 106301 / E264</strain>
    </source>
</reference>
<comment type="function">
    <text evidence="1">This protein binds to 23S rRNA in the presence of protein L20.</text>
</comment>
<comment type="subunit">
    <text evidence="1">Part of the 50S ribosomal subunit. Contacts protein L20.</text>
</comment>
<comment type="similarity">
    <text evidence="1">Belongs to the bacterial ribosomal protein bL21 family.</text>
</comment>
<evidence type="ECO:0000255" key="1">
    <source>
        <dbReference type="HAMAP-Rule" id="MF_01363"/>
    </source>
</evidence>
<evidence type="ECO:0000305" key="2"/>
<organism>
    <name type="scientific">Burkholderia thailandensis (strain ATCC 700388 / DSM 13276 / CCUG 48851 / CIP 106301 / E264)</name>
    <dbReference type="NCBI Taxonomy" id="271848"/>
    <lineage>
        <taxon>Bacteria</taxon>
        <taxon>Pseudomonadati</taxon>
        <taxon>Pseudomonadota</taxon>
        <taxon>Betaproteobacteria</taxon>
        <taxon>Burkholderiales</taxon>
        <taxon>Burkholderiaceae</taxon>
        <taxon>Burkholderia</taxon>
        <taxon>pseudomallei group</taxon>
    </lineage>
</organism>
<gene>
    <name evidence="1" type="primary">rplU</name>
    <name type="ordered locus">BTH_I1140</name>
</gene>